<feature type="chain" id="PRO_1000199660" description="Protoheme IX farnesyltransferase">
    <location>
        <begin position="1"/>
        <end position="303"/>
    </location>
</feature>
<feature type="transmembrane region" description="Helical" evidence="1">
    <location>
        <begin position="25"/>
        <end position="45"/>
    </location>
</feature>
<feature type="transmembrane region" description="Helical" evidence="1">
    <location>
        <begin position="54"/>
        <end position="74"/>
    </location>
</feature>
<feature type="transmembrane region" description="Helical" evidence="1">
    <location>
        <begin position="104"/>
        <end position="124"/>
    </location>
</feature>
<feature type="transmembrane region" description="Helical" evidence="1">
    <location>
        <begin position="125"/>
        <end position="145"/>
    </location>
</feature>
<feature type="transmembrane region" description="Helical" evidence="1">
    <location>
        <begin position="151"/>
        <end position="171"/>
    </location>
</feature>
<feature type="transmembrane region" description="Helical" evidence="1">
    <location>
        <begin position="179"/>
        <end position="199"/>
    </location>
</feature>
<feature type="transmembrane region" description="Helical" evidence="1">
    <location>
        <begin position="228"/>
        <end position="248"/>
    </location>
</feature>
<feature type="transmembrane region" description="Helical" evidence="1">
    <location>
        <begin position="280"/>
        <end position="300"/>
    </location>
</feature>
<organism>
    <name type="scientific">Staphylococcus carnosus (strain TM300)</name>
    <dbReference type="NCBI Taxonomy" id="396513"/>
    <lineage>
        <taxon>Bacteria</taxon>
        <taxon>Bacillati</taxon>
        <taxon>Bacillota</taxon>
        <taxon>Bacilli</taxon>
        <taxon>Bacillales</taxon>
        <taxon>Staphylococcaceae</taxon>
        <taxon>Staphylococcus</taxon>
    </lineage>
</organism>
<comment type="function">
    <text evidence="1">Converts heme B (protoheme IX) to heme O by substitution of the vinyl group on carbon 2 of heme B porphyrin ring with a hydroxyethyl farnesyl side group.</text>
</comment>
<comment type="catalytic activity">
    <reaction evidence="1">
        <text>heme b + (2E,6E)-farnesyl diphosphate + H2O = Fe(II)-heme o + diphosphate</text>
        <dbReference type="Rhea" id="RHEA:28070"/>
        <dbReference type="ChEBI" id="CHEBI:15377"/>
        <dbReference type="ChEBI" id="CHEBI:33019"/>
        <dbReference type="ChEBI" id="CHEBI:60344"/>
        <dbReference type="ChEBI" id="CHEBI:60530"/>
        <dbReference type="ChEBI" id="CHEBI:175763"/>
        <dbReference type="EC" id="2.5.1.141"/>
    </reaction>
</comment>
<comment type="pathway">
    <text evidence="1">Porphyrin-containing compound metabolism; heme O biosynthesis; heme O from protoheme: step 1/1.</text>
</comment>
<comment type="subunit">
    <text evidence="1">Interacts with CtaA.</text>
</comment>
<comment type="subcellular location">
    <subcellularLocation>
        <location evidence="1">Cell membrane</location>
        <topology evidence="1">Multi-pass membrane protein</topology>
    </subcellularLocation>
</comment>
<comment type="miscellaneous">
    <text evidence="1">Carbon 2 of the heme B porphyrin ring is defined according to the Fischer nomenclature.</text>
</comment>
<comment type="similarity">
    <text evidence="1">Belongs to the UbiA prenyltransferase family. Protoheme IX farnesyltransferase subfamily.</text>
</comment>
<dbReference type="EC" id="2.5.1.141" evidence="1"/>
<dbReference type="EMBL" id="AM295250">
    <property type="protein sequence ID" value="CAL27652.1"/>
    <property type="molecule type" value="Genomic_DNA"/>
</dbReference>
<dbReference type="RefSeq" id="WP_015899994.1">
    <property type="nucleotide sequence ID" value="NC_012121.1"/>
</dbReference>
<dbReference type="SMR" id="B9DPV9"/>
<dbReference type="GeneID" id="93795679"/>
<dbReference type="KEGG" id="sca:SCA_0742"/>
<dbReference type="eggNOG" id="COG0109">
    <property type="taxonomic scope" value="Bacteria"/>
</dbReference>
<dbReference type="HOGENOM" id="CLU_029631_0_0_9"/>
<dbReference type="OrthoDB" id="9814417at2"/>
<dbReference type="BioCyc" id="SCAR396513:SCA_RS03760-MONOMER"/>
<dbReference type="UniPathway" id="UPA00834">
    <property type="reaction ID" value="UER00712"/>
</dbReference>
<dbReference type="Proteomes" id="UP000000444">
    <property type="component" value="Chromosome"/>
</dbReference>
<dbReference type="GO" id="GO:0005886">
    <property type="term" value="C:plasma membrane"/>
    <property type="evidence" value="ECO:0007669"/>
    <property type="project" value="UniProtKB-SubCell"/>
</dbReference>
<dbReference type="GO" id="GO:0008495">
    <property type="term" value="F:protoheme IX farnesyltransferase activity"/>
    <property type="evidence" value="ECO:0007669"/>
    <property type="project" value="UniProtKB-UniRule"/>
</dbReference>
<dbReference type="GO" id="GO:0048034">
    <property type="term" value="P:heme O biosynthetic process"/>
    <property type="evidence" value="ECO:0007669"/>
    <property type="project" value="UniProtKB-UniRule"/>
</dbReference>
<dbReference type="CDD" id="cd13957">
    <property type="entry name" value="PT_UbiA_Cox10"/>
    <property type="match status" value="1"/>
</dbReference>
<dbReference type="Gene3D" id="1.10.357.140">
    <property type="entry name" value="UbiA prenyltransferase"/>
    <property type="match status" value="1"/>
</dbReference>
<dbReference type="HAMAP" id="MF_00154">
    <property type="entry name" value="CyoE_CtaB"/>
    <property type="match status" value="1"/>
</dbReference>
<dbReference type="InterPro" id="IPR006369">
    <property type="entry name" value="Protohaem_IX_farnesylTrfase"/>
</dbReference>
<dbReference type="InterPro" id="IPR000537">
    <property type="entry name" value="UbiA_prenyltransferase"/>
</dbReference>
<dbReference type="InterPro" id="IPR044878">
    <property type="entry name" value="UbiA_sf"/>
</dbReference>
<dbReference type="NCBIfam" id="TIGR01473">
    <property type="entry name" value="cyoE_ctaB"/>
    <property type="match status" value="1"/>
</dbReference>
<dbReference type="PANTHER" id="PTHR43448">
    <property type="entry name" value="PROTOHEME IX FARNESYLTRANSFERASE, MITOCHONDRIAL"/>
    <property type="match status" value="1"/>
</dbReference>
<dbReference type="PANTHER" id="PTHR43448:SF2">
    <property type="entry name" value="PROTOHEME IX FARNESYLTRANSFERASE, MITOCHONDRIAL"/>
    <property type="match status" value="1"/>
</dbReference>
<dbReference type="Pfam" id="PF01040">
    <property type="entry name" value="UbiA"/>
    <property type="match status" value="1"/>
</dbReference>
<evidence type="ECO:0000255" key="1">
    <source>
        <dbReference type="HAMAP-Rule" id="MF_00154"/>
    </source>
</evidence>
<accession>B9DPV9</accession>
<keyword id="KW-1003">Cell membrane</keyword>
<keyword id="KW-0350">Heme biosynthesis</keyword>
<keyword id="KW-0472">Membrane</keyword>
<keyword id="KW-1185">Reference proteome</keyword>
<keyword id="KW-0808">Transferase</keyword>
<keyword id="KW-0812">Transmembrane</keyword>
<keyword id="KW-1133">Transmembrane helix</keyword>
<sequence length="303" mass="33613">MDKGQTLSQTSGRVTFKELKAIIKMGLVQGNLIPAFAGSWLAIVLANHSFLSSIPQILLMLIGSTLIMGGACALNNYYDQDIDRIMPSKQARPTVNDRISNKNLLILSFGMMVIGEIALFILNIPSGVIGLMGIIGYVSFYSIWSKRHTTWNTVIGAFPGAVPPVIGWTAIEGQLSMTAIALFLVIFCWQPIHFYALAIKRQDEYSAANIPMLPSVKGFNRTRIGMFVWLILLLPLPFLLSDLGPVFIGLATLLNLGWIYLGLTSYKKKSDHMKWATLMFVYSLNYLVLFFALVVIISLINMI</sequence>
<proteinExistence type="inferred from homology"/>
<name>COXX_STACT</name>
<protein>
    <recommendedName>
        <fullName evidence="1">Protoheme IX farnesyltransferase</fullName>
        <ecNumber evidence="1">2.5.1.141</ecNumber>
    </recommendedName>
    <alternativeName>
        <fullName evidence="1">Heme B farnesyltransferase</fullName>
    </alternativeName>
    <alternativeName>
        <fullName evidence="1">Heme O synthase</fullName>
    </alternativeName>
</protein>
<gene>
    <name evidence="1" type="primary">ctaB</name>
    <name type="ordered locus">Sca_0742</name>
</gene>
<reference key="1">
    <citation type="journal article" date="2009" name="Appl. Environ. Microbiol.">
        <title>Genome analysis of the meat starter culture bacterium Staphylococcus carnosus TM300.</title>
        <authorList>
            <person name="Rosenstein R."/>
            <person name="Nerz C."/>
            <person name="Biswas L."/>
            <person name="Resch A."/>
            <person name="Raddatz G."/>
            <person name="Schuster S.C."/>
            <person name="Goetz F."/>
        </authorList>
    </citation>
    <scope>NUCLEOTIDE SEQUENCE [LARGE SCALE GENOMIC DNA]</scope>
    <source>
        <strain>TM300</strain>
    </source>
</reference>